<comment type="function">
    <text evidence="1">Negative regulator of class I heat shock genes (grpE-dnaK-dnaJ and groELS operons). Prevents heat-shock induction of these operons.</text>
</comment>
<comment type="similarity">
    <text evidence="1">Belongs to the HrcA family.</text>
</comment>
<name>HRCA_CHLL2</name>
<gene>
    <name evidence="1" type="primary">hrcA</name>
    <name type="ordered locus">Clim_1693</name>
</gene>
<feature type="chain" id="PRO_1000092801" description="Heat-inducible transcription repressor HrcA">
    <location>
        <begin position="1"/>
        <end position="357"/>
    </location>
</feature>
<accession>B3EE33</accession>
<organism>
    <name type="scientific">Chlorobium limicola (strain DSM 245 / NBRC 103803 / 6330)</name>
    <dbReference type="NCBI Taxonomy" id="290315"/>
    <lineage>
        <taxon>Bacteria</taxon>
        <taxon>Pseudomonadati</taxon>
        <taxon>Chlorobiota</taxon>
        <taxon>Chlorobiia</taxon>
        <taxon>Chlorobiales</taxon>
        <taxon>Chlorobiaceae</taxon>
        <taxon>Chlorobium/Pelodictyon group</taxon>
        <taxon>Chlorobium</taxon>
    </lineage>
</organism>
<reference key="1">
    <citation type="submission" date="2008-05" db="EMBL/GenBank/DDBJ databases">
        <title>Complete sequence of Chlorobium limicola DSM 245.</title>
        <authorList>
            <consortium name="US DOE Joint Genome Institute"/>
            <person name="Lucas S."/>
            <person name="Copeland A."/>
            <person name="Lapidus A."/>
            <person name="Glavina del Rio T."/>
            <person name="Dalin E."/>
            <person name="Tice H."/>
            <person name="Bruce D."/>
            <person name="Goodwin L."/>
            <person name="Pitluck S."/>
            <person name="Schmutz J."/>
            <person name="Larimer F."/>
            <person name="Land M."/>
            <person name="Hauser L."/>
            <person name="Kyrpides N."/>
            <person name="Ovchinnikova G."/>
            <person name="Zhao F."/>
            <person name="Li T."/>
            <person name="Liu Z."/>
            <person name="Overmann J."/>
            <person name="Bryant D.A."/>
            <person name="Richardson P."/>
        </authorList>
    </citation>
    <scope>NUCLEOTIDE SEQUENCE [LARGE SCALE GENOMIC DNA]</scope>
    <source>
        <strain>DSM 245 / NBRC 103803 / 6330</strain>
    </source>
</reference>
<evidence type="ECO:0000255" key="1">
    <source>
        <dbReference type="HAMAP-Rule" id="MF_00081"/>
    </source>
</evidence>
<proteinExistence type="inferred from homology"/>
<keyword id="KW-0678">Repressor</keyword>
<keyword id="KW-0346">Stress response</keyword>
<keyword id="KW-0804">Transcription</keyword>
<keyword id="KW-0805">Transcription regulation</keyword>
<sequence length="357" mass="39828">MDSPELTLRERQVLGIVIQSYVVSAAPVGSRYIARNYNLGLSDATIRNVMADLEREGFISQPHTSAGRVPTDKGYRYYVDLIMHVQRINDEEKRRIDADFGQLTCERKGTSTEVLFSAAKVLGTISRQLSVVLSPAFSNAVFEKLDMVLLSSSRMMVILSIRSLFLRTIVMELDIEVSRQMVDDVVAVLNERLSGLTLVEIRRTLVVRLSDCTCDSALLDRIVRSSGELFDETPMIERLYISGAEYIIDQPEFKQPEKVRDLISMIEDKTSVAKLVDDATAAVEAVKPQGMDVSITIGKENIERKAGELTILSTPYYVGDMVGKLGILGPTRMDYEHAVRVLNYMADCLSTTLSEVP</sequence>
<protein>
    <recommendedName>
        <fullName evidence="1">Heat-inducible transcription repressor HrcA</fullName>
    </recommendedName>
</protein>
<dbReference type="EMBL" id="CP001097">
    <property type="protein sequence ID" value="ACD90735.1"/>
    <property type="molecule type" value="Genomic_DNA"/>
</dbReference>
<dbReference type="RefSeq" id="WP_012466608.1">
    <property type="nucleotide sequence ID" value="NC_010803.1"/>
</dbReference>
<dbReference type="SMR" id="B3EE33"/>
<dbReference type="STRING" id="290315.Clim_1693"/>
<dbReference type="KEGG" id="cli:Clim_1693"/>
<dbReference type="eggNOG" id="COG1420">
    <property type="taxonomic scope" value="Bacteria"/>
</dbReference>
<dbReference type="HOGENOM" id="CLU_050019_1_0_10"/>
<dbReference type="OrthoDB" id="9783139at2"/>
<dbReference type="Proteomes" id="UP000008841">
    <property type="component" value="Chromosome"/>
</dbReference>
<dbReference type="GO" id="GO:0003677">
    <property type="term" value="F:DNA binding"/>
    <property type="evidence" value="ECO:0007669"/>
    <property type="project" value="InterPro"/>
</dbReference>
<dbReference type="GO" id="GO:0045892">
    <property type="term" value="P:negative regulation of DNA-templated transcription"/>
    <property type="evidence" value="ECO:0007669"/>
    <property type="project" value="UniProtKB-UniRule"/>
</dbReference>
<dbReference type="Gene3D" id="3.30.450.40">
    <property type="match status" value="1"/>
</dbReference>
<dbReference type="Gene3D" id="3.30.390.60">
    <property type="entry name" value="Heat-inducible transcription repressor hrca homolog, domain 3"/>
    <property type="match status" value="1"/>
</dbReference>
<dbReference type="Gene3D" id="1.10.10.10">
    <property type="entry name" value="Winged helix-like DNA-binding domain superfamily/Winged helix DNA-binding domain"/>
    <property type="match status" value="1"/>
</dbReference>
<dbReference type="HAMAP" id="MF_00081">
    <property type="entry name" value="HrcA"/>
    <property type="match status" value="1"/>
</dbReference>
<dbReference type="InterPro" id="IPR029016">
    <property type="entry name" value="GAF-like_dom_sf"/>
</dbReference>
<dbReference type="InterPro" id="IPR002571">
    <property type="entry name" value="HrcA"/>
</dbReference>
<dbReference type="InterPro" id="IPR021153">
    <property type="entry name" value="HrcA_C"/>
</dbReference>
<dbReference type="InterPro" id="IPR036388">
    <property type="entry name" value="WH-like_DNA-bd_sf"/>
</dbReference>
<dbReference type="InterPro" id="IPR036390">
    <property type="entry name" value="WH_DNA-bd_sf"/>
</dbReference>
<dbReference type="InterPro" id="IPR023120">
    <property type="entry name" value="WHTH_transcript_rep_HrcA_IDD"/>
</dbReference>
<dbReference type="NCBIfam" id="TIGR00331">
    <property type="entry name" value="hrcA"/>
    <property type="match status" value="1"/>
</dbReference>
<dbReference type="PANTHER" id="PTHR34824">
    <property type="entry name" value="HEAT-INDUCIBLE TRANSCRIPTION REPRESSOR HRCA"/>
    <property type="match status" value="1"/>
</dbReference>
<dbReference type="PANTHER" id="PTHR34824:SF1">
    <property type="entry name" value="HEAT-INDUCIBLE TRANSCRIPTION REPRESSOR HRCA"/>
    <property type="match status" value="1"/>
</dbReference>
<dbReference type="Pfam" id="PF01628">
    <property type="entry name" value="HrcA"/>
    <property type="match status" value="1"/>
</dbReference>
<dbReference type="PIRSF" id="PIRSF005485">
    <property type="entry name" value="HrcA"/>
    <property type="match status" value="1"/>
</dbReference>
<dbReference type="SUPFAM" id="SSF55781">
    <property type="entry name" value="GAF domain-like"/>
    <property type="match status" value="1"/>
</dbReference>
<dbReference type="SUPFAM" id="SSF46785">
    <property type="entry name" value="Winged helix' DNA-binding domain"/>
    <property type="match status" value="1"/>
</dbReference>